<dbReference type="EC" id="4.1.2.29"/>
<dbReference type="EMBL" id="AP006627">
    <property type="protein sequence ID" value="BAD62970.1"/>
    <property type="molecule type" value="Genomic_DNA"/>
</dbReference>
<dbReference type="RefSeq" id="WP_011245289.1">
    <property type="nucleotide sequence ID" value="NC_006582.1"/>
</dbReference>
<dbReference type="SMR" id="Q5WKY5"/>
<dbReference type="STRING" id="66692.ABC0428"/>
<dbReference type="KEGG" id="bcl:ABC0428"/>
<dbReference type="eggNOG" id="COG0191">
    <property type="taxonomic scope" value="Bacteria"/>
</dbReference>
<dbReference type="HOGENOM" id="CLU_040088_0_1_9"/>
<dbReference type="OrthoDB" id="9803995at2"/>
<dbReference type="UniPathway" id="UPA00076">
    <property type="reaction ID" value="UER00147"/>
</dbReference>
<dbReference type="Proteomes" id="UP000001168">
    <property type="component" value="Chromosome"/>
</dbReference>
<dbReference type="GO" id="GO:0047441">
    <property type="term" value="F:5-dehydro-2-deoxyphosphogluconate aldolase activity"/>
    <property type="evidence" value="ECO:0007669"/>
    <property type="project" value="UniProtKB-EC"/>
</dbReference>
<dbReference type="GO" id="GO:0004332">
    <property type="term" value="F:fructose-bisphosphate aldolase activity"/>
    <property type="evidence" value="ECO:0007669"/>
    <property type="project" value="InterPro"/>
</dbReference>
<dbReference type="GO" id="GO:0008270">
    <property type="term" value="F:zinc ion binding"/>
    <property type="evidence" value="ECO:0007669"/>
    <property type="project" value="InterPro"/>
</dbReference>
<dbReference type="GO" id="GO:0030388">
    <property type="term" value="P:fructose 1,6-bisphosphate metabolic process"/>
    <property type="evidence" value="ECO:0007669"/>
    <property type="project" value="InterPro"/>
</dbReference>
<dbReference type="GO" id="GO:0006096">
    <property type="term" value="P:glycolytic process"/>
    <property type="evidence" value="ECO:0007669"/>
    <property type="project" value="InterPro"/>
</dbReference>
<dbReference type="CDD" id="cd00947">
    <property type="entry name" value="TBP_aldolase_IIB"/>
    <property type="match status" value="1"/>
</dbReference>
<dbReference type="Gene3D" id="3.20.20.70">
    <property type="entry name" value="Aldolase class I"/>
    <property type="match status" value="1"/>
</dbReference>
<dbReference type="InterPro" id="IPR013785">
    <property type="entry name" value="Aldolase_TIM"/>
</dbReference>
<dbReference type="InterPro" id="IPR050246">
    <property type="entry name" value="Class_II_FBP_aldolase"/>
</dbReference>
<dbReference type="InterPro" id="IPR000771">
    <property type="entry name" value="FBA_II"/>
</dbReference>
<dbReference type="InterPro" id="IPR011289">
    <property type="entry name" value="Fruc_bis_ald_class-2"/>
</dbReference>
<dbReference type="NCBIfam" id="TIGR00167">
    <property type="entry name" value="cbbA"/>
    <property type="match status" value="1"/>
</dbReference>
<dbReference type="NCBIfam" id="TIGR01859">
    <property type="entry name" value="fruc_bis_ald"/>
    <property type="match status" value="1"/>
</dbReference>
<dbReference type="PANTHER" id="PTHR30304">
    <property type="entry name" value="D-TAGATOSE-1,6-BISPHOSPHATE ALDOLASE"/>
    <property type="match status" value="1"/>
</dbReference>
<dbReference type="PANTHER" id="PTHR30304:SF0">
    <property type="entry name" value="D-TAGATOSE-1,6-BISPHOSPHATE ALDOLASE SUBUNIT GATY-RELATED"/>
    <property type="match status" value="1"/>
</dbReference>
<dbReference type="Pfam" id="PF01116">
    <property type="entry name" value="F_bP_aldolase"/>
    <property type="match status" value="1"/>
</dbReference>
<dbReference type="PIRSF" id="PIRSF001359">
    <property type="entry name" value="F_bP_aldolase_II"/>
    <property type="match status" value="1"/>
</dbReference>
<dbReference type="SUPFAM" id="SSF51569">
    <property type="entry name" value="Aldolase"/>
    <property type="match status" value="1"/>
</dbReference>
<dbReference type="PROSITE" id="PS00806">
    <property type="entry name" value="ALDOLASE_CLASS_II_2"/>
    <property type="match status" value="1"/>
</dbReference>
<reference key="1">
    <citation type="submission" date="2003-10" db="EMBL/GenBank/DDBJ databases">
        <title>The complete genome sequence of the alkaliphilic Bacillus clausii KSM-K16.</title>
        <authorList>
            <person name="Takaki Y."/>
            <person name="Kageyama Y."/>
            <person name="Shimamura S."/>
            <person name="Suzuki H."/>
            <person name="Nishi S."/>
            <person name="Hatada Y."/>
            <person name="Kawai S."/>
            <person name="Ito S."/>
            <person name="Horikoshi K."/>
        </authorList>
    </citation>
    <scope>NUCLEOTIDE SEQUENCE [LARGE SCALE GENOMIC DNA]</scope>
    <source>
        <strain>KSM-K16</strain>
    </source>
</reference>
<comment type="function">
    <text evidence="1">Produces dihydroxyacetone phosphate (DHAP or glycerone phosphate) and malonic semialdehyde (MSA or 3-oxopropanoate) from 6-phospho-5-dehydro-2-deoxy-D-gluconate (DKGP).</text>
</comment>
<comment type="catalytic activity">
    <reaction>
        <text>6-phospho-5-dehydro-2-deoxy-D-gluconate = 3-oxopropanoate + dihydroxyacetone phosphate</text>
        <dbReference type="Rhea" id="RHEA:13177"/>
        <dbReference type="ChEBI" id="CHEBI:33190"/>
        <dbReference type="ChEBI" id="CHEBI:57642"/>
        <dbReference type="ChEBI" id="CHEBI:57949"/>
        <dbReference type="EC" id="4.1.2.29"/>
    </reaction>
</comment>
<comment type="cofactor">
    <cofactor evidence="1">
        <name>Zn(2+)</name>
        <dbReference type="ChEBI" id="CHEBI:29105"/>
    </cofactor>
</comment>
<comment type="pathway">
    <text>Polyol metabolism; myo-inositol degradation into acetyl-CoA; acetyl-CoA from myo-inositol: step 6/7.</text>
</comment>
<comment type="similarity">
    <text evidence="2">Belongs to the class II fructose-bisphosphate aldolase family. IolJ subfamily.</text>
</comment>
<organism>
    <name type="scientific">Shouchella clausii (strain KSM-K16)</name>
    <name type="common">Alkalihalobacillus clausii</name>
    <dbReference type="NCBI Taxonomy" id="66692"/>
    <lineage>
        <taxon>Bacteria</taxon>
        <taxon>Bacillati</taxon>
        <taxon>Bacillota</taxon>
        <taxon>Bacilli</taxon>
        <taxon>Bacillales</taxon>
        <taxon>Bacillaceae</taxon>
        <taxon>Shouchella</taxon>
    </lineage>
</organism>
<gene>
    <name type="primary">iolJ</name>
    <name type="ordered locus">ABC0428</name>
</gene>
<feature type="chain" id="PRO_0000352281" description="6-phospho-5-dehydro-2-deoxy-D-gluconate aldolase">
    <location>
        <begin position="1"/>
        <end position="293"/>
    </location>
</feature>
<feature type="active site" description="Proton donor" evidence="1">
    <location>
        <position position="85"/>
    </location>
</feature>
<feature type="binding site" evidence="1">
    <location>
        <position position="86"/>
    </location>
    <ligand>
        <name>Zn(2+)</name>
        <dbReference type="ChEBI" id="CHEBI:29105"/>
        <note>catalytic</note>
    </ligand>
</feature>
<feature type="binding site" evidence="1">
    <location>
        <position position="180"/>
    </location>
    <ligand>
        <name>Zn(2+)</name>
        <dbReference type="ChEBI" id="CHEBI:29105"/>
        <note>catalytic</note>
    </ligand>
</feature>
<feature type="binding site" evidence="1">
    <location>
        <position position="181"/>
    </location>
    <ligand>
        <name>dihydroxyacetone phosphate</name>
        <dbReference type="ChEBI" id="CHEBI:57642"/>
    </ligand>
</feature>
<feature type="binding site" evidence="1">
    <location>
        <position position="208"/>
    </location>
    <ligand>
        <name>Zn(2+)</name>
        <dbReference type="ChEBI" id="CHEBI:29105"/>
        <note>catalytic</note>
    </ligand>
</feature>
<feature type="binding site" evidence="1">
    <location>
        <begin position="209"/>
        <end position="211"/>
    </location>
    <ligand>
        <name>dihydroxyacetone phosphate</name>
        <dbReference type="ChEBI" id="CHEBI:57642"/>
    </ligand>
</feature>
<feature type="binding site" evidence="1">
    <location>
        <begin position="230"/>
        <end position="233"/>
    </location>
    <ligand>
        <name>dihydroxyacetone phosphate</name>
        <dbReference type="ChEBI" id="CHEBI:57642"/>
    </ligand>
</feature>
<feature type="modified residue" description="Phosphothreonine" evidence="1">
    <location>
        <position position="233"/>
    </location>
</feature>
<proteinExistence type="inferred from homology"/>
<protein>
    <recommendedName>
        <fullName>6-phospho-5-dehydro-2-deoxy-D-gluconate aldolase</fullName>
        <shortName>DKGP aldolase</shortName>
        <ecNumber>4.1.2.29</ecNumber>
    </recommendedName>
</protein>
<accession>Q5WKY5</accession>
<name>IOLJ_SHOC1</name>
<evidence type="ECO:0000250" key="1"/>
<evidence type="ECO:0000305" key="2"/>
<sequence>MGFVPMAPLLADAKKDSYAIGQFNINGLQWAKAILAGAESQQSPVIAAASDRLIDYLGGFQTVVAMMGALTDELGITVPVVLHLDHGLSIERCKKAVDAGFSSVMFDGSHYPINENIDMTKEVVAYAHAHNVSVEGEVGTVGGMEDGLMAEIKYADVEECQRFVCETNVDALAAALGSVHGKYKGEPKLGFNEMAAISASTNVPLVLHGASGIPDEQLQRAIKLGHAKININTECMIAWSDACRTTFAEQETAFEPRLLLQEGLAMVQATVEKKIKQFGAANKAAGSASLQRR</sequence>
<keyword id="KW-0456">Lyase</keyword>
<keyword id="KW-0479">Metal-binding</keyword>
<keyword id="KW-0597">Phosphoprotein</keyword>
<keyword id="KW-1185">Reference proteome</keyword>
<keyword id="KW-0862">Zinc</keyword>